<accession>O29667</accession>
<feature type="chain" id="PRO_0000135571" description="tRNA-guanine(15) transglycosylase">
    <location>
        <begin position="1"/>
        <end position="481"/>
    </location>
</feature>
<feature type="active site" description="Nucleophile" evidence="1">
    <location>
        <position position="87"/>
    </location>
</feature>
<feature type="binding site" evidence="1">
    <location>
        <position position="122"/>
    </location>
    <ligand>
        <name>substrate</name>
    </ligand>
</feature>
<feature type="binding site" evidence="1">
    <location>
        <position position="191"/>
    </location>
    <ligand>
        <name>substrate</name>
    </ligand>
</feature>
<feature type="binding site" evidence="1">
    <location>
        <position position="273"/>
    </location>
    <ligand>
        <name>Zn(2+)</name>
        <dbReference type="ChEBI" id="CHEBI:29105"/>
    </ligand>
</feature>
<feature type="binding site" evidence="1">
    <location>
        <position position="275"/>
    </location>
    <ligand>
        <name>Zn(2+)</name>
        <dbReference type="ChEBI" id="CHEBI:29105"/>
    </ligand>
</feature>
<feature type="binding site" evidence="1">
    <location>
        <position position="278"/>
    </location>
    <ligand>
        <name>Zn(2+)</name>
        <dbReference type="ChEBI" id="CHEBI:29105"/>
    </ligand>
</feature>
<organism>
    <name type="scientific">Archaeoglobus fulgidus (strain ATCC 49558 / DSM 4304 / JCM 9628 / NBRC 100126 / VC-16)</name>
    <dbReference type="NCBI Taxonomy" id="224325"/>
    <lineage>
        <taxon>Archaea</taxon>
        <taxon>Methanobacteriati</taxon>
        <taxon>Methanobacteriota</taxon>
        <taxon>Archaeoglobi</taxon>
        <taxon>Archaeoglobales</taxon>
        <taxon>Archaeoglobaceae</taxon>
        <taxon>Archaeoglobus</taxon>
    </lineage>
</organism>
<protein>
    <recommendedName>
        <fullName evidence="1">tRNA-guanine(15) transglycosylase</fullName>
        <ecNumber evidence="1">2.4.2.48</ecNumber>
    </recommendedName>
    <alternativeName>
        <fullName evidence="1">7-cyano-7-deazaguanine tRNA-ribosyltransferase</fullName>
    </alternativeName>
    <alternativeName>
        <fullName evidence="1">Archaeal tRNA-guanine transglycosylase</fullName>
    </alternativeName>
</protein>
<reference key="1">
    <citation type="journal article" date="1997" name="Nature">
        <title>The complete genome sequence of the hyperthermophilic, sulphate-reducing archaeon Archaeoglobus fulgidus.</title>
        <authorList>
            <person name="Klenk H.-P."/>
            <person name="Clayton R.A."/>
            <person name="Tomb J.-F."/>
            <person name="White O."/>
            <person name="Nelson K.E."/>
            <person name="Ketchum K.A."/>
            <person name="Dodson R.J."/>
            <person name="Gwinn M.L."/>
            <person name="Hickey E.K."/>
            <person name="Peterson J.D."/>
            <person name="Richardson D.L."/>
            <person name="Kerlavage A.R."/>
            <person name="Graham D.E."/>
            <person name="Kyrpides N.C."/>
            <person name="Fleischmann R.D."/>
            <person name="Quackenbush J."/>
            <person name="Lee N.H."/>
            <person name="Sutton G.G."/>
            <person name="Gill S.R."/>
            <person name="Kirkness E.F."/>
            <person name="Dougherty B.A."/>
            <person name="McKenney K."/>
            <person name="Adams M.D."/>
            <person name="Loftus B.J."/>
            <person name="Peterson S.N."/>
            <person name="Reich C.I."/>
            <person name="McNeil L.K."/>
            <person name="Badger J.H."/>
            <person name="Glodek A."/>
            <person name="Zhou L."/>
            <person name="Overbeek R."/>
            <person name="Gocayne J.D."/>
            <person name="Weidman J.F."/>
            <person name="McDonald L.A."/>
            <person name="Utterback T.R."/>
            <person name="Cotton M.D."/>
            <person name="Spriggs T."/>
            <person name="Artiach P."/>
            <person name="Kaine B.P."/>
            <person name="Sykes S.M."/>
            <person name="Sadow P.W."/>
            <person name="D'Andrea K.P."/>
            <person name="Bowman C."/>
            <person name="Fujii C."/>
            <person name="Garland S.A."/>
            <person name="Mason T.M."/>
            <person name="Olsen G.J."/>
            <person name="Fraser C.M."/>
            <person name="Smith H.O."/>
            <person name="Woese C.R."/>
            <person name="Venter J.C."/>
        </authorList>
    </citation>
    <scope>NUCLEOTIDE SEQUENCE [LARGE SCALE GENOMIC DNA]</scope>
    <source>
        <strain>ATCC 49558 / DSM 4304 / JCM 9628 / NBRC 100126 / VC-16</strain>
    </source>
</reference>
<sequence length="481" mass="54819">MQRFEILDKDAMGRICRIETPHGRIETPTILPVINPNIPFIRAEEMKKFGAQAVITNSYIIYRSMREEALEKGVHGILETDMPVMTDSGSYQLMVYGDVEIKNAEIVEFQRHIGSDIIVPLDIPTPPDADYATAESDLRITLEREREAKELLKGAENLLAVPVQGSTHPDLRRFAAGEARKIGGDIYPIGAVVPLMDAYRFRDLARVILEVRSALPVEPIHLFGCGHPMLFAMAVALGCDLFDSAAYALYAKDDRYLTVYGTKKLSELNYFPCKCPVCSNHDPEELRRMEKNERERLIAEHNLYVSFQEIETIKQAIKENSLFELVEKRVRAHPNMLAGWRQVKHYWELLEKADPKMKRKFLYTGIDSLYRPAVRRHVKAIKNVELPEEVLVSTDFGIYANIYLRPVFGPVPAEMLETYPAGHAEIPEEDVVEEEALKAASEALMELMNSHPEKRFKVYVSKVWMKHLQNLPPNGELNVLS</sequence>
<comment type="function">
    <text evidence="1">Exchanges the guanine residue with 7-cyano-7-deazaguanine (preQ0) at position 15 in the dihydrouridine loop (D-loop) of archaeal tRNAs.</text>
</comment>
<comment type="catalytic activity">
    <reaction evidence="1">
        <text>guanosine(15) in tRNA + 7-cyano-7-deazaguanine = 7-cyano-7-carbaguanosine(15) in tRNA + guanine</text>
        <dbReference type="Rhea" id="RHEA:43164"/>
        <dbReference type="Rhea" id="RHEA-COMP:10371"/>
        <dbReference type="Rhea" id="RHEA-COMP:10372"/>
        <dbReference type="ChEBI" id="CHEBI:16235"/>
        <dbReference type="ChEBI" id="CHEBI:45075"/>
        <dbReference type="ChEBI" id="CHEBI:74269"/>
        <dbReference type="ChEBI" id="CHEBI:82850"/>
        <dbReference type="EC" id="2.4.2.48"/>
    </reaction>
</comment>
<comment type="cofactor">
    <cofactor evidence="1">
        <name>Zn(2+)</name>
        <dbReference type="ChEBI" id="CHEBI:29105"/>
    </cofactor>
    <text evidence="1">Binds 1 zinc ion per subunit.</text>
</comment>
<comment type="pathway">
    <text evidence="1">tRNA modification; archaeosine-tRNA biosynthesis.</text>
</comment>
<comment type="similarity">
    <text evidence="1">Belongs to the archaeosine tRNA-ribosyltransferase family.</text>
</comment>
<keyword id="KW-0328">Glycosyltransferase</keyword>
<keyword id="KW-0479">Metal-binding</keyword>
<keyword id="KW-1185">Reference proteome</keyword>
<keyword id="KW-0808">Transferase</keyword>
<keyword id="KW-0819">tRNA processing</keyword>
<keyword id="KW-0862">Zinc</keyword>
<name>ATGT_ARCFU</name>
<proteinExistence type="inferred from homology"/>
<dbReference type="EC" id="2.4.2.48" evidence="1"/>
<dbReference type="EMBL" id="AE000782">
    <property type="protein sequence ID" value="AAB90652.1"/>
    <property type="molecule type" value="Genomic_DNA"/>
</dbReference>
<dbReference type="PIR" id="D69323">
    <property type="entry name" value="D69323"/>
</dbReference>
<dbReference type="RefSeq" id="WP_010878092.1">
    <property type="nucleotide sequence ID" value="NC_000917.1"/>
</dbReference>
<dbReference type="SMR" id="O29667"/>
<dbReference type="STRING" id="224325.AF_0588"/>
<dbReference type="PaxDb" id="224325-AF_0588"/>
<dbReference type="EnsemblBacteria" id="AAB90652">
    <property type="protein sequence ID" value="AAB90652"/>
    <property type="gene ID" value="AF_0588"/>
</dbReference>
<dbReference type="GeneID" id="1483805"/>
<dbReference type="KEGG" id="afu:AF_0588"/>
<dbReference type="eggNOG" id="arCOG00989">
    <property type="taxonomic scope" value="Archaea"/>
</dbReference>
<dbReference type="HOGENOM" id="CLU_030083_0_0_2"/>
<dbReference type="OrthoDB" id="6871at2157"/>
<dbReference type="PhylomeDB" id="O29667"/>
<dbReference type="UniPathway" id="UPA00393"/>
<dbReference type="Proteomes" id="UP000002199">
    <property type="component" value="Chromosome"/>
</dbReference>
<dbReference type="GO" id="GO:0005737">
    <property type="term" value="C:cytoplasm"/>
    <property type="evidence" value="ECO:0007669"/>
    <property type="project" value="TreeGrafter"/>
</dbReference>
<dbReference type="GO" id="GO:0016763">
    <property type="term" value="F:pentosyltransferase activity"/>
    <property type="evidence" value="ECO:0007669"/>
    <property type="project" value="UniProtKB-UniRule"/>
</dbReference>
<dbReference type="GO" id="GO:0008270">
    <property type="term" value="F:zinc ion binding"/>
    <property type="evidence" value="ECO:0007669"/>
    <property type="project" value="UniProtKB-UniRule"/>
</dbReference>
<dbReference type="GO" id="GO:0002099">
    <property type="term" value="P:tRNA wobble guanine modification"/>
    <property type="evidence" value="ECO:0007669"/>
    <property type="project" value="TreeGrafter"/>
</dbReference>
<dbReference type="Gene3D" id="3.20.20.105">
    <property type="entry name" value="Queuine tRNA-ribosyltransferase-like"/>
    <property type="match status" value="1"/>
</dbReference>
<dbReference type="HAMAP" id="MF_01634">
    <property type="entry name" value="TgtA_arch"/>
    <property type="match status" value="1"/>
</dbReference>
<dbReference type="InterPro" id="IPR050076">
    <property type="entry name" value="ArchSynthase1/Queuine_TRR"/>
</dbReference>
<dbReference type="InterPro" id="IPR036511">
    <property type="entry name" value="TGT-like_sf"/>
</dbReference>
<dbReference type="InterPro" id="IPR004804">
    <property type="entry name" value="TgtA"/>
</dbReference>
<dbReference type="InterPro" id="IPR002616">
    <property type="entry name" value="tRNA_ribo_trans-like"/>
</dbReference>
<dbReference type="NCBIfam" id="TIGR00432">
    <property type="entry name" value="arcsn_tRNA_tgt"/>
    <property type="match status" value="1"/>
</dbReference>
<dbReference type="NCBIfam" id="TIGR00449">
    <property type="entry name" value="tgt_general"/>
    <property type="match status" value="1"/>
</dbReference>
<dbReference type="PANTHER" id="PTHR46499">
    <property type="entry name" value="QUEUINE TRNA-RIBOSYLTRANSFERASE"/>
    <property type="match status" value="1"/>
</dbReference>
<dbReference type="PANTHER" id="PTHR46499:SF1">
    <property type="entry name" value="QUEUINE TRNA-RIBOSYLTRANSFERASE"/>
    <property type="match status" value="1"/>
</dbReference>
<dbReference type="Pfam" id="PF01702">
    <property type="entry name" value="TGT"/>
    <property type="match status" value="1"/>
</dbReference>
<dbReference type="SUPFAM" id="SSF88802">
    <property type="entry name" value="Pre-PUA domain"/>
    <property type="match status" value="1"/>
</dbReference>
<dbReference type="SUPFAM" id="SSF51713">
    <property type="entry name" value="tRNA-guanine transglycosylase"/>
    <property type="match status" value="1"/>
</dbReference>
<gene>
    <name evidence="1" type="primary">tgtA</name>
    <name type="ordered locus">AF_0588</name>
</gene>
<evidence type="ECO:0000255" key="1">
    <source>
        <dbReference type="HAMAP-Rule" id="MF_01634"/>
    </source>
</evidence>